<dbReference type="EMBL" id="CP000103">
    <property type="protein sequence ID" value="ABB74062.1"/>
    <property type="molecule type" value="Genomic_DNA"/>
</dbReference>
<dbReference type="RefSeq" id="WP_011380112.1">
    <property type="nucleotide sequence ID" value="NC_007614.1"/>
</dbReference>
<dbReference type="SMR" id="Q2YB09"/>
<dbReference type="STRING" id="323848.Nmul_A0755"/>
<dbReference type="KEGG" id="nmu:Nmul_A0755"/>
<dbReference type="eggNOG" id="COG0080">
    <property type="taxonomic scope" value="Bacteria"/>
</dbReference>
<dbReference type="HOGENOM" id="CLU_074237_2_0_4"/>
<dbReference type="OrthoDB" id="9802408at2"/>
<dbReference type="Proteomes" id="UP000002718">
    <property type="component" value="Chromosome"/>
</dbReference>
<dbReference type="GO" id="GO:0022625">
    <property type="term" value="C:cytosolic large ribosomal subunit"/>
    <property type="evidence" value="ECO:0007669"/>
    <property type="project" value="TreeGrafter"/>
</dbReference>
<dbReference type="GO" id="GO:0070180">
    <property type="term" value="F:large ribosomal subunit rRNA binding"/>
    <property type="evidence" value="ECO:0007669"/>
    <property type="project" value="UniProtKB-UniRule"/>
</dbReference>
<dbReference type="GO" id="GO:0003735">
    <property type="term" value="F:structural constituent of ribosome"/>
    <property type="evidence" value="ECO:0007669"/>
    <property type="project" value="InterPro"/>
</dbReference>
<dbReference type="GO" id="GO:0006412">
    <property type="term" value="P:translation"/>
    <property type="evidence" value="ECO:0007669"/>
    <property type="project" value="UniProtKB-UniRule"/>
</dbReference>
<dbReference type="CDD" id="cd00349">
    <property type="entry name" value="Ribosomal_L11"/>
    <property type="match status" value="1"/>
</dbReference>
<dbReference type="FunFam" id="1.10.10.250:FF:000001">
    <property type="entry name" value="50S ribosomal protein L11"/>
    <property type="match status" value="1"/>
</dbReference>
<dbReference type="FunFam" id="3.30.1550.10:FF:000001">
    <property type="entry name" value="50S ribosomal protein L11"/>
    <property type="match status" value="1"/>
</dbReference>
<dbReference type="Gene3D" id="1.10.10.250">
    <property type="entry name" value="Ribosomal protein L11, C-terminal domain"/>
    <property type="match status" value="1"/>
</dbReference>
<dbReference type="Gene3D" id="3.30.1550.10">
    <property type="entry name" value="Ribosomal protein L11/L12, N-terminal domain"/>
    <property type="match status" value="1"/>
</dbReference>
<dbReference type="HAMAP" id="MF_00736">
    <property type="entry name" value="Ribosomal_uL11"/>
    <property type="match status" value="1"/>
</dbReference>
<dbReference type="InterPro" id="IPR000911">
    <property type="entry name" value="Ribosomal_uL11"/>
</dbReference>
<dbReference type="InterPro" id="IPR006519">
    <property type="entry name" value="Ribosomal_uL11_bac-typ"/>
</dbReference>
<dbReference type="InterPro" id="IPR020783">
    <property type="entry name" value="Ribosomal_uL11_C"/>
</dbReference>
<dbReference type="InterPro" id="IPR036769">
    <property type="entry name" value="Ribosomal_uL11_C_sf"/>
</dbReference>
<dbReference type="InterPro" id="IPR020785">
    <property type="entry name" value="Ribosomal_uL11_CS"/>
</dbReference>
<dbReference type="InterPro" id="IPR020784">
    <property type="entry name" value="Ribosomal_uL11_N"/>
</dbReference>
<dbReference type="InterPro" id="IPR036796">
    <property type="entry name" value="Ribosomal_uL11_N_sf"/>
</dbReference>
<dbReference type="NCBIfam" id="TIGR01632">
    <property type="entry name" value="L11_bact"/>
    <property type="match status" value="1"/>
</dbReference>
<dbReference type="PANTHER" id="PTHR11661">
    <property type="entry name" value="60S RIBOSOMAL PROTEIN L12"/>
    <property type="match status" value="1"/>
</dbReference>
<dbReference type="PANTHER" id="PTHR11661:SF1">
    <property type="entry name" value="LARGE RIBOSOMAL SUBUNIT PROTEIN UL11M"/>
    <property type="match status" value="1"/>
</dbReference>
<dbReference type="Pfam" id="PF00298">
    <property type="entry name" value="Ribosomal_L11"/>
    <property type="match status" value="1"/>
</dbReference>
<dbReference type="Pfam" id="PF03946">
    <property type="entry name" value="Ribosomal_L11_N"/>
    <property type="match status" value="1"/>
</dbReference>
<dbReference type="SMART" id="SM00649">
    <property type="entry name" value="RL11"/>
    <property type="match status" value="1"/>
</dbReference>
<dbReference type="SUPFAM" id="SSF54747">
    <property type="entry name" value="Ribosomal L11/L12e N-terminal domain"/>
    <property type="match status" value="1"/>
</dbReference>
<dbReference type="SUPFAM" id="SSF46906">
    <property type="entry name" value="Ribosomal protein L11, C-terminal domain"/>
    <property type="match status" value="1"/>
</dbReference>
<dbReference type="PROSITE" id="PS00359">
    <property type="entry name" value="RIBOSOMAL_L11"/>
    <property type="match status" value="1"/>
</dbReference>
<name>RL11_NITMU</name>
<keyword id="KW-0488">Methylation</keyword>
<keyword id="KW-1185">Reference proteome</keyword>
<keyword id="KW-0687">Ribonucleoprotein</keyword>
<keyword id="KW-0689">Ribosomal protein</keyword>
<keyword id="KW-0694">RNA-binding</keyword>
<keyword id="KW-0699">rRNA-binding</keyword>
<evidence type="ECO:0000255" key="1">
    <source>
        <dbReference type="HAMAP-Rule" id="MF_00736"/>
    </source>
</evidence>
<evidence type="ECO:0000305" key="2"/>
<accession>Q2YB09</accession>
<protein>
    <recommendedName>
        <fullName evidence="1">Large ribosomal subunit protein uL11</fullName>
    </recommendedName>
    <alternativeName>
        <fullName evidence="2">50S ribosomal protein L11</fullName>
    </alternativeName>
</protein>
<reference key="1">
    <citation type="submission" date="2005-08" db="EMBL/GenBank/DDBJ databases">
        <title>Complete sequence of chromosome 1 of Nitrosospira multiformis ATCC 25196.</title>
        <authorList>
            <person name="Copeland A."/>
            <person name="Lucas S."/>
            <person name="Lapidus A."/>
            <person name="Barry K."/>
            <person name="Detter J.C."/>
            <person name="Glavina T."/>
            <person name="Hammon N."/>
            <person name="Israni S."/>
            <person name="Pitluck S."/>
            <person name="Chain P."/>
            <person name="Malfatti S."/>
            <person name="Shin M."/>
            <person name="Vergez L."/>
            <person name="Schmutz J."/>
            <person name="Larimer F."/>
            <person name="Land M."/>
            <person name="Hauser L."/>
            <person name="Kyrpides N."/>
            <person name="Lykidis A."/>
            <person name="Richardson P."/>
        </authorList>
    </citation>
    <scope>NUCLEOTIDE SEQUENCE [LARGE SCALE GENOMIC DNA]</scope>
    <source>
        <strain>ATCC 25196 / NCIMB 11849 / C 71</strain>
    </source>
</reference>
<proteinExistence type="inferred from homology"/>
<comment type="function">
    <text evidence="1">Forms part of the ribosomal stalk which helps the ribosome interact with GTP-bound translation factors.</text>
</comment>
<comment type="subunit">
    <text evidence="1">Part of the ribosomal stalk of the 50S ribosomal subunit. Interacts with L10 and the large rRNA to form the base of the stalk. L10 forms an elongated spine to which L12 dimers bind in a sequential fashion forming a multimeric L10(L12)X complex.</text>
</comment>
<comment type="PTM">
    <text evidence="1">One or more lysine residues are methylated.</text>
</comment>
<comment type="similarity">
    <text evidence="1">Belongs to the universal ribosomal protein uL11 family.</text>
</comment>
<gene>
    <name evidence="1" type="primary">rplK</name>
    <name type="ordered locus">Nmul_A0755</name>
</gene>
<sequence>MAKKIVGYIKLQVPAGKANPSPPIGPALGQRGLNIMEFCKAFNAATQKMEVGLPVPVVITAYADKSFTFTMKTTPATVLIKKAAGVGKGSAKPHTDKIGRLTRKQMEEIAQIKMPDLTAADMDAAVRTIAGSARSMGIEVEGA</sequence>
<feature type="chain" id="PRO_0000258178" description="Large ribosomal subunit protein uL11">
    <location>
        <begin position="1"/>
        <end position="143"/>
    </location>
</feature>
<organism>
    <name type="scientific">Nitrosospira multiformis (strain ATCC 25196 / NCIMB 11849 / C 71)</name>
    <dbReference type="NCBI Taxonomy" id="323848"/>
    <lineage>
        <taxon>Bacteria</taxon>
        <taxon>Pseudomonadati</taxon>
        <taxon>Pseudomonadota</taxon>
        <taxon>Betaproteobacteria</taxon>
        <taxon>Nitrosomonadales</taxon>
        <taxon>Nitrosomonadaceae</taxon>
        <taxon>Nitrosospira</taxon>
    </lineage>
</organism>